<accession>A0L5W3</accession>
<reference key="1">
    <citation type="journal article" date="2009" name="Appl. Environ. Microbiol.">
        <title>Complete genome sequence of the chemolithoautotrophic marine magnetotactic coccus strain MC-1.</title>
        <authorList>
            <person name="Schubbe S."/>
            <person name="Williams T.J."/>
            <person name="Xie G."/>
            <person name="Kiss H.E."/>
            <person name="Brettin T.S."/>
            <person name="Martinez D."/>
            <person name="Ross C.A."/>
            <person name="Schuler D."/>
            <person name="Cox B.L."/>
            <person name="Nealson K.H."/>
            <person name="Bazylinski D.A."/>
        </authorList>
    </citation>
    <scope>NUCLEOTIDE SEQUENCE [LARGE SCALE GENOMIC DNA]</scope>
    <source>
        <strain>ATCC BAA-1437 / JCM 17883 / MC-1</strain>
    </source>
</reference>
<organism>
    <name type="scientific">Magnetococcus marinus (strain ATCC BAA-1437 / JCM 17883 / MC-1)</name>
    <dbReference type="NCBI Taxonomy" id="156889"/>
    <lineage>
        <taxon>Bacteria</taxon>
        <taxon>Pseudomonadati</taxon>
        <taxon>Pseudomonadota</taxon>
        <taxon>Alphaproteobacteria</taxon>
        <taxon>Magnetococcales</taxon>
        <taxon>Magnetococcaceae</taxon>
        <taxon>Magnetococcus</taxon>
    </lineage>
</organism>
<proteinExistence type="inferred from homology"/>
<keyword id="KW-1185">Reference proteome</keyword>
<keyword id="KW-0678">Repressor</keyword>
<keyword id="KW-0687">Ribonucleoprotein</keyword>
<keyword id="KW-0689">Ribosomal protein</keyword>
<keyword id="KW-0694">RNA-binding</keyword>
<keyword id="KW-0699">rRNA-binding</keyword>
<keyword id="KW-0810">Translation regulation</keyword>
<keyword id="KW-0820">tRNA-binding</keyword>
<comment type="function">
    <text evidence="1">Binds directly to 23S rRNA. The L1 stalk is quite mobile in the ribosome, and is involved in E site tRNA release.</text>
</comment>
<comment type="function">
    <text evidence="1">Protein L1 is also a translational repressor protein, it controls the translation of the L11 operon by binding to its mRNA.</text>
</comment>
<comment type="subunit">
    <text evidence="1">Part of the 50S ribosomal subunit.</text>
</comment>
<comment type="similarity">
    <text evidence="1">Belongs to the universal ribosomal protein uL1 family.</text>
</comment>
<gene>
    <name evidence="1" type="primary">rplA</name>
    <name type="ordered locus">Mmc1_0837</name>
</gene>
<feature type="chain" id="PRO_0000308041" description="Large ribosomal subunit protein uL1">
    <location>
        <begin position="1"/>
        <end position="229"/>
    </location>
</feature>
<protein>
    <recommendedName>
        <fullName evidence="1">Large ribosomal subunit protein uL1</fullName>
    </recommendedName>
    <alternativeName>
        <fullName evidence="2">50S ribosomal protein L1</fullName>
    </alternativeName>
</protein>
<dbReference type="EMBL" id="CP000471">
    <property type="protein sequence ID" value="ABK43356.1"/>
    <property type="molecule type" value="Genomic_DNA"/>
</dbReference>
<dbReference type="RefSeq" id="WP_011712516.1">
    <property type="nucleotide sequence ID" value="NC_008576.1"/>
</dbReference>
<dbReference type="SMR" id="A0L5W3"/>
<dbReference type="STRING" id="156889.Mmc1_0837"/>
<dbReference type="KEGG" id="mgm:Mmc1_0837"/>
<dbReference type="eggNOG" id="COG0081">
    <property type="taxonomic scope" value="Bacteria"/>
</dbReference>
<dbReference type="HOGENOM" id="CLU_062853_0_0_5"/>
<dbReference type="OrthoDB" id="9803740at2"/>
<dbReference type="Proteomes" id="UP000002586">
    <property type="component" value="Chromosome"/>
</dbReference>
<dbReference type="GO" id="GO:0022625">
    <property type="term" value="C:cytosolic large ribosomal subunit"/>
    <property type="evidence" value="ECO:0007669"/>
    <property type="project" value="TreeGrafter"/>
</dbReference>
<dbReference type="GO" id="GO:0019843">
    <property type="term" value="F:rRNA binding"/>
    <property type="evidence" value="ECO:0007669"/>
    <property type="project" value="UniProtKB-UniRule"/>
</dbReference>
<dbReference type="GO" id="GO:0003735">
    <property type="term" value="F:structural constituent of ribosome"/>
    <property type="evidence" value="ECO:0007669"/>
    <property type="project" value="InterPro"/>
</dbReference>
<dbReference type="GO" id="GO:0000049">
    <property type="term" value="F:tRNA binding"/>
    <property type="evidence" value="ECO:0007669"/>
    <property type="project" value="UniProtKB-KW"/>
</dbReference>
<dbReference type="GO" id="GO:0006417">
    <property type="term" value="P:regulation of translation"/>
    <property type="evidence" value="ECO:0007669"/>
    <property type="project" value="UniProtKB-KW"/>
</dbReference>
<dbReference type="GO" id="GO:0006412">
    <property type="term" value="P:translation"/>
    <property type="evidence" value="ECO:0007669"/>
    <property type="project" value="UniProtKB-UniRule"/>
</dbReference>
<dbReference type="CDD" id="cd00403">
    <property type="entry name" value="Ribosomal_L1"/>
    <property type="match status" value="1"/>
</dbReference>
<dbReference type="FunFam" id="3.40.50.790:FF:000001">
    <property type="entry name" value="50S ribosomal protein L1"/>
    <property type="match status" value="1"/>
</dbReference>
<dbReference type="Gene3D" id="3.30.190.20">
    <property type="match status" value="1"/>
</dbReference>
<dbReference type="Gene3D" id="3.40.50.790">
    <property type="match status" value="1"/>
</dbReference>
<dbReference type="HAMAP" id="MF_01318_B">
    <property type="entry name" value="Ribosomal_uL1_B"/>
    <property type="match status" value="1"/>
</dbReference>
<dbReference type="InterPro" id="IPR005878">
    <property type="entry name" value="Ribosom_uL1_bac-type"/>
</dbReference>
<dbReference type="InterPro" id="IPR002143">
    <property type="entry name" value="Ribosomal_uL1"/>
</dbReference>
<dbReference type="InterPro" id="IPR023674">
    <property type="entry name" value="Ribosomal_uL1-like"/>
</dbReference>
<dbReference type="InterPro" id="IPR028364">
    <property type="entry name" value="Ribosomal_uL1/biogenesis"/>
</dbReference>
<dbReference type="InterPro" id="IPR016095">
    <property type="entry name" value="Ribosomal_uL1_3-a/b-sand"/>
</dbReference>
<dbReference type="InterPro" id="IPR023673">
    <property type="entry name" value="Ribosomal_uL1_CS"/>
</dbReference>
<dbReference type="NCBIfam" id="TIGR01169">
    <property type="entry name" value="rplA_bact"/>
    <property type="match status" value="1"/>
</dbReference>
<dbReference type="PANTHER" id="PTHR36427">
    <property type="entry name" value="54S RIBOSOMAL PROTEIN L1, MITOCHONDRIAL"/>
    <property type="match status" value="1"/>
</dbReference>
<dbReference type="PANTHER" id="PTHR36427:SF3">
    <property type="entry name" value="LARGE RIBOSOMAL SUBUNIT PROTEIN UL1M"/>
    <property type="match status" value="1"/>
</dbReference>
<dbReference type="Pfam" id="PF00687">
    <property type="entry name" value="Ribosomal_L1"/>
    <property type="match status" value="1"/>
</dbReference>
<dbReference type="PIRSF" id="PIRSF002155">
    <property type="entry name" value="Ribosomal_L1"/>
    <property type="match status" value="1"/>
</dbReference>
<dbReference type="SUPFAM" id="SSF56808">
    <property type="entry name" value="Ribosomal protein L1"/>
    <property type="match status" value="1"/>
</dbReference>
<dbReference type="PROSITE" id="PS01199">
    <property type="entry name" value="RIBOSOMAL_L1"/>
    <property type="match status" value="1"/>
</dbReference>
<name>RL1_MAGMM</name>
<sequence length="229" mass="24325">MAKISKRATAHGGKFDRSVNHPLSDAIKIIKECATAKFDETIEVAVNLGVDPRHADQMVRGSVSLPKGTGKVVRVLVFAKGEKAEEAKAAGADVVGADDLLEKIQGGWLEFDRVVATPDVMGVVGRLGKILGPRNMMPNPKLGTVTFDVAKVVQEIKAGQVAFRVEKSGIIHAGVGKASFPVEDLVENITALVEQLRRMKPAAAKGTYMKKVSISSTMGPGIKVDQSSI</sequence>
<evidence type="ECO:0000255" key="1">
    <source>
        <dbReference type="HAMAP-Rule" id="MF_01318"/>
    </source>
</evidence>
<evidence type="ECO:0000305" key="2"/>